<name>PANC2_BRADU</name>
<dbReference type="EC" id="6.3.2.1" evidence="1"/>
<dbReference type="EMBL" id="BA000040">
    <property type="protein sequence ID" value="BAC50427.1"/>
    <property type="molecule type" value="Genomic_DNA"/>
</dbReference>
<dbReference type="RefSeq" id="NP_771802.1">
    <property type="nucleotide sequence ID" value="NC_004463.1"/>
</dbReference>
<dbReference type="RefSeq" id="WP_011087920.1">
    <property type="nucleotide sequence ID" value="NC_004463.1"/>
</dbReference>
<dbReference type="SMR" id="Q89JV7"/>
<dbReference type="STRING" id="224911.AAV28_23185"/>
<dbReference type="EnsemblBacteria" id="BAC50427">
    <property type="protein sequence ID" value="BAC50427"/>
    <property type="gene ID" value="BAC50427"/>
</dbReference>
<dbReference type="GeneID" id="46492168"/>
<dbReference type="KEGG" id="bja:blr5162"/>
<dbReference type="PATRIC" id="fig|224911.44.peg.5039"/>
<dbReference type="eggNOG" id="COG0414">
    <property type="taxonomic scope" value="Bacteria"/>
</dbReference>
<dbReference type="HOGENOM" id="CLU_047148_0_2_5"/>
<dbReference type="InParanoid" id="Q89JV7"/>
<dbReference type="OrthoDB" id="9773087at2"/>
<dbReference type="PhylomeDB" id="Q89JV7"/>
<dbReference type="UniPathway" id="UPA00028">
    <property type="reaction ID" value="UER00005"/>
</dbReference>
<dbReference type="Proteomes" id="UP000002526">
    <property type="component" value="Chromosome"/>
</dbReference>
<dbReference type="GO" id="GO:0005829">
    <property type="term" value="C:cytosol"/>
    <property type="evidence" value="ECO:0000318"/>
    <property type="project" value="GO_Central"/>
</dbReference>
<dbReference type="GO" id="GO:0005524">
    <property type="term" value="F:ATP binding"/>
    <property type="evidence" value="ECO:0007669"/>
    <property type="project" value="UniProtKB-KW"/>
</dbReference>
<dbReference type="GO" id="GO:0004592">
    <property type="term" value="F:pantoate-beta-alanine ligase activity"/>
    <property type="evidence" value="ECO:0000318"/>
    <property type="project" value="GO_Central"/>
</dbReference>
<dbReference type="GO" id="GO:0015940">
    <property type="term" value="P:pantothenate biosynthetic process"/>
    <property type="evidence" value="ECO:0000318"/>
    <property type="project" value="GO_Central"/>
</dbReference>
<dbReference type="CDD" id="cd00560">
    <property type="entry name" value="PanC"/>
    <property type="match status" value="1"/>
</dbReference>
<dbReference type="FunFam" id="3.30.1300.10:FF:000001">
    <property type="entry name" value="Pantothenate synthetase"/>
    <property type="match status" value="1"/>
</dbReference>
<dbReference type="FunFam" id="3.40.50.620:FF:000114">
    <property type="entry name" value="Pantothenate synthetase"/>
    <property type="match status" value="1"/>
</dbReference>
<dbReference type="Gene3D" id="3.40.50.620">
    <property type="entry name" value="HUPs"/>
    <property type="match status" value="1"/>
</dbReference>
<dbReference type="Gene3D" id="3.30.1300.10">
    <property type="entry name" value="Pantoate-beta-alanine ligase, C-terminal domain"/>
    <property type="match status" value="1"/>
</dbReference>
<dbReference type="HAMAP" id="MF_00158">
    <property type="entry name" value="PanC"/>
    <property type="match status" value="1"/>
</dbReference>
<dbReference type="InterPro" id="IPR003721">
    <property type="entry name" value="Pantoate_ligase"/>
</dbReference>
<dbReference type="InterPro" id="IPR042176">
    <property type="entry name" value="Pantoate_ligase_C"/>
</dbReference>
<dbReference type="InterPro" id="IPR014729">
    <property type="entry name" value="Rossmann-like_a/b/a_fold"/>
</dbReference>
<dbReference type="NCBIfam" id="TIGR00018">
    <property type="entry name" value="panC"/>
    <property type="match status" value="1"/>
</dbReference>
<dbReference type="PANTHER" id="PTHR21299">
    <property type="entry name" value="CYTIDYLATE KINASE/PANTOATE-BETA-ALANINE LIGASE"/>
    <property type="match status" value="1"/>
</dbReference>
<dbReference type="PANTHER" id="PTHR21299:SF1">
    <property type="entry name" value="PANTOATE--BETA-ALANINE LIGASE"/>
    <property type="match status" value="1"/>
</dbReference>
<dbReference type="Pfam" id="PF02569">
    <property type="entry name" value="Pantoate_ligase"/>
    <property type="match status" value="1"/>
</dbReference>
<dbReference type="SUPFAM" id="SSF52374">
    <property type="entry name" value="Nucleotidylyl transferase"/>
    <property type="match status" value="1"/>
</dbReference>
<comment type="function">
    <text evidence="1">Catalyzes the condensation of pantoate with beta-alanine in an ATP-dependent reaction via a pantoyl-adenylate intermediate.</text>
</comment>
<comment type="catalytic activity">
    <reaction evidence="1">
        <text>(R)-pantoate + beta-alanine + ATP = (R)-pantothenate + AMP + diphosphate + H(+)</text>
        <dbReference type="Rhea" id="RHEA:10912"/>
        <dbReference type="ChEBI" id="CHEBI:15378"/>
        <dbReference type="ChEBI" id="CHEBI:15980"/>
        <dbReference type="ChEBI" id="CHEBI:29032"/>
        <dbReference type="ChEBI" id="CHEBI:30616"/>
        <dbReference type="ChEBI" id="CHEBI:33019"/>
        <dbReference type="ChEBI" id="CHEBI:57966"/>
        <dbReference type="ChEBI" id="CHEBI:456215"/>
        <dbReference type="EC" id="6.3.2.1"/>
    </reaction>
</comment>
<comment type="pathway">
    <text evidence="1">Cofactor biosynthesis; (R)-pantothenate biosynthesis; (R)-pantothenate from (R)-pantoate and beta-alanine: step 1/1.</text>
</comment>
<comment type="subunit">
    <text evidence="1">Homodimer.</text>
</comment>
<comment type="subcellular location">
    <subcellularLocation>
        <location evidence="1">Cytoplasm</location>
    </subcellularLocation>
</comment>
<comment type="miscellaneous">
    <text evidence="1">The reaction proceeds by a bi uni uni bi ping pong mechanism.</text>
</comment>
<comment type="similarity">
    <text evidence="1">Belongs to the pantothenate synthetase family.</text>
</comment>
<keyword id="KW-0067">ATP-binding</keyword>
<keyword id="KW-0963">Cytoplasm</keyword>
<keyword id="KW-0436">Ligase</keyword>
<keyword id="KW-0547">Nucleotide-binding</keyword>
<keyword id="KW-0566">Pantothenate biosynthesis</keyword>
<keyword id="KW-1185">Reference proteome</keyword>
<protein>
    <recommendedName>
        <fullName evidence="1">Pantothenate synthetase 2</fullName>
        <shortName evidence="1">PS 2</shortName>
        <ecNumber evidence="1">6.3.2.1</ecNumber>
    </recommendedName>
    <alternativeName>
        <fullName evidence="1">Pantoate--beta-alanine ligase 2</fullName>
    </alternativeName>
    <alternativeName>
        <fullName evidence="1">Pantoate-activating enzyme 2</fullName>
    </alternativeName>
</protein>
<gene>
    <name evidence="1" type="primary">panC2</name>
    <name type="ordered locus">blr5162</name>
</gene>
<accession>Q89JV7</accession>
<reference key="1">
    <citation type="journal article" date="2002" name="DNA Res.">
        <title>Complete genomic sequence of nitrogen-fixing symbiotic bacterium Bradyrhizobium japonicum USDA110.</title>
        <authorList>
            <person name="Kaneko T."/>
            <person name="Nakamura Y."/>
            <person name="Sato S."/>
            <person name="Minamisawa K."/>
            <person name="Uchiumi T."/>
            <person name="Sasamoto S."/>
            <person name="Watanabe A."/>
            <person name="Idesawa K."/>
            <person name="Iriguchi M."/>
            <person name="Kawashima K."/>
            <person name="Kohara M."/>
            <person name="Matsumoto M."/>
            <person name="Shimpo S."/>
            <person name="Tsuruoka H."/>
            <person name="Wada T."/>
            <person name="Yamada M."/>
            <person name="Tabata S."/>
        </authorList>
    </citation>
    <scope>NUCLEOTIDE SEQUENCE [LARGE SCALE GENOMIC DNA]</scope>
    <source>
        <strain>JCM 10833 / BCRC 13528 / IAM 13628 / NBRC 14792 / USDA 110</strain>
    </source>
</reference>
<proteinExistence type="inferred from homology"/>
<organism>
    <name type="scientific">Bradyrhizobium diazoefficiens (strain JCM 10833 / BCRC 13528 / IAM 13628 / NBRC 14792 / USDA 110)</name>
    <dbReference type="NCBI Taxonomy" id="224911"/>
    <lineage>
        <taxon>Bacteria</taxon>
        <taxon>Pseudomonadati</taxon>
        <taxon>Pseudomonadota</taxon>
        <taxon>Alphaproteobacteria</taxon>
        <taxon>Hyphomicrobiales</taxon>
        <taxon>Nitrobacteraceae</taxon>
        <taxon>Bradyrhizobium</taxon>
    </lineage>
</organism>
<sequence length="283" mass="30969">MSRSPLIARTVPALRRAADNLRKRKATIALVPTMGALHDGHVSLVRLAKRRASRVVVSIFVNPTQFAPTEDFGAYPRTWKADIAKLAAEDVDIVWHPGVEAMYPEGFATRIVPEGPALAGLEDRFRPHFFGGVATVVGKLFTQCRPDFAIFGEKDFQQLRVVTQMARDLDLGVKVIGSRTVRERDGLAMSSRNVYLSPQERQTATTLYRAMKDSAGRIRAGEAIASAMARGAATIKAAGFVLDYFEARHAETLAQVTSRKDGPLRILVAAKLGTTRLIDNIAV</sequence>
<evidence type="ECO:0000255" key="1">
    <source>
        <dbReference type="HAMAP-Rule" id="MF_00158"/>
    </source>
</evidence>
<feature type="chain" id="PRO_0000305409" description="Pantothenate synthetase 2">
    <location>
        <begin position="1"/>
        <end position="283"/>
    </location>
</feature>
<feature type="active site" description="Proton donor" evidence="1">
    <location>
        <position position="41"/>
    </location>
</feature>
<feature type="binding site" evidence="1">
    <location>
        <begin position="34"/>
        <end position="41"/>
    </location>
    <ligand>
        <name>ATP</name>
        <dbReference type="ChEBI" id="CHEBI:30616"/>
    </ligand>
</feature>
<feature type="binding site" evidence="1">
    <location>
        <position position="65"/>
    </location>
    <ligand>
        <name>(R)-pantoate</name>
        <dbReference type="ChEBI" id="CHEBI:15980"/>
    </ligand>
</feature>
<feature type="binding site" evidence="1">
    <location>
        <position position="65"/>
    </location>
    <ligand>
        <name>beta-alanine</name>
        <dbReference type="ChEBI" id="CHEBI:57966"/>
    </ligand>
</feature>
<feature type="binding site" evidence="1">
    <location>
        <begin position="152"/>
        <end position="155"/>
    </location>
    <ligand>
        <name>ATP</name>
        <dbReference type="ChEBI" id="CHEBI:30616"/>
    </ligand>
</feature>
<feature type="binding site" evidence="1">
    <location>
        <position position="158"/>
    </location>
    <ligand>
        <name>(R)-pantoate</name>
        <dbReference type="ChEBI" id="CHEBI:15980"/>
    </ligand>
</feature>
<feature type="binding site" evidence="1">
    <location>
        <position position="181"/>
    </location>
    <ligand>
        <name>ATP</name>
        <dbReference type="ChEBI" id="CHEBI:30616"/>
    </ligand>
</feature>
<feature type="binding site" evidence="1">
    <location>
        <begin position="189"/>
        <end position="192"/>
    </location>
    <ligand>
        <name>ATP</name>
        <dbReference type="ChEBI" id="CHEBI:30616"/>
    </ligand>
</feature>